<protein>
    <recommendedName>
        <fullName evidence="5 8">Medusin-PT</fullName>
    </recommendedName>
</protein>
<keyword id="KW-0027">Amidation</keyword>
<keyword id="KW-0878">Amphibian defense peptide</keyword>
<keyword id="KW-0044">Antibiotic</keyword>
<keyword id="KW-0929">Antimicrobial</keyword>
<keyword id="KW-0165">Cleavage on pair of basic residues</keyword>
<keyword id="KW-0903">Direct protein sequencing</keyword>
<keyword id="KW-0295">Fungicide</keyword>
<keyword id="KW-0391">Immunity</keyword>
<keyword id="KW-0399">Innate immunity</keyword>
<keyword id="KW-0472">Membrane</keyword>
<keyword id="KW-0964">Secreted</keyword>
<keyword id="KW-0732">Signal</keyword>
<keyword id="KW-1052">Target cell membrane</keyword>
<keyword id="KW-1053">Target membrane</keyword>
<dbReference type="EMBL" id="LT591889">
    <property type="protein sequence ID" value="SBO46661.1"/>
    <property type="molecule type" value="mRNA"/>
</dbReference>
<dbReference type="GO" id="GO:0005576">
    <property type="term" value="C:extracellular region"/>
    <property type="evidence" value="ECO:0007669"/>
    <property type="project" value="UniProtKB-SubCell"/>
</dbReference>
<dbReference type="GO" id="GO:0016020">
    <property type="term" value="C:membrane"/>
    <property type="evidence" value="ECO:0007669"/>
    <property type="project" value="UniProtKB-KW"/>
</dbReference>
<dbReference type="GO" id="GO:0044218">
    <property type="term" value="C:other organism cell membrane"/>
    <property type="evidence" value="ECO:0007669"/>
    <property type="project" value="UniProtKB-KW"/>
</dbReference>
<dbReference type="GO" id="GO:0042742">
    <property type="term" value="P:defense response to bacterium"/>
    <property type="evidence" value="ECO:0007669"/>
    <property type="project" value="UniProtKB-KW"/>
</dbReference>
<dbReference type="GO" id="GO:0050832">
    <property type="term" value="P:defense response to fungus"/>
    <property type="evidence" value="ECO:0007669"/>
    <property type="project" value="UniProtKB-KW"/>
</dbReference>
<dbReference type="GO" id="GO:0045087">
    <property type="term" value="P:innate immune response"/>
    <property type="evidence" value="ECO:0007669"/>
    <property type="project" value="UniProtKB-KW"/>
</dbReference>
<dbReference type="GO" id="GO:0031640">
    <property type="term" value="P:killing of cells of another organism"/>
    <property type="evidence" value="ECO:0007669"/>
    <property type="project" value="UniProtKB-KW"/>
</dbReference>
<dbReference type="InterPro" id="IPR004275">
    <property type="entry name" value="Frog_antimicrobial_propeptide"/>
</dbReference>
<dbReference type="Pfam" id="PF03032">
    <property type="entry name" value="FSAP_sig_propep"/>
    <property type="match status" value="1"/>
</dbReference>
<feature type="signal peptide" evidence="2">
    <location>
        <begin position="1"/>
        <end position="22"/>
    </location>
</feature>
<feature type="propeptide" id="PRO_0000449998" evidence="7">
    <location>
        <begin position="23"/>
        <end position="48"/>
    </location>
</feature>
<feature type="peptide" id="PRO_5012815711" description="Medusin-PT" evidence="4">
    <location>
        <begin position="49"/>
        <end position="66"/>
    </location>
</feature>
<feature type="region of interest" description="Disordered" evidence="3">
    <location>
        <begin position="25"/>
        <end position="46"/>
    </location>
</feature>
<feature type="compositionally biased region" description="Acidic residues" evidence="3">
    <location>
        <begin position="31"/>
        <end position="40"/>
    </location>
</feature>
<feature type="modified residue" description="Leucine amide" evidence="4">
    <location>
        <position position="66"/>
    </location>
</feature>
<feature type="mutagenesis site" description="In medusin-PT2; increase in antimicrobial activity against Gram-positive bacteria and fungi, and increase in hemolytic activity (is more potent against S.aureus and gains activity against MRSA, E.faecalis, and C.albicans. No change against E.coli and P.aeruginosa. Important increase in biofilm inhibition and small increase in biofilm eradication).">
    <original>P</original>
    <variation>K</variation>
    <location>
        <position position="54"/>
    </location>
</feature>
<feature type="mutagenesis site" description="In medusin-PT1; increase in antimicrobial activity, and increase in hemolytic activity (is more potent against S.aureus and gains activity against MRSA, E.faecalis, E.coli and C.albicans. No change against P.aeruginosa. Important increase in both biofilm inhibition and biofilm eradication). In medusin-PT1a; increase in antimicrobial activity, and increase in hemolytic activity (is more potent against S.aureus and gains activity against MRSA, E.faecalis, E.coli, P.aeruginosa and C.albicans. Important increase in both biofilm inhibition and biofilm eradication).">
    <original>T</original>
    <variation>K</variation>
    <location>
        <position position="58"/>
    </location>
</feature>
<reference key="1">
    <citation type="journal article" date="2017" name="Front. Microbiol.">
        <title>Targeted modification of a novel amphibian antimicrobial peptide from Phyllomedusa tarsius to enhance its activity against MRSA and microbial biofilm.</title>
        <authorList>
            <person name="Gao Y."/>
            <person name="Wu D."/>
            <person name="Wang L."/>
            <person name="Lin C."/>
            <person name="Ma C."/>
            <person name="Xi X."/>
            <person name="Zhou M."/>
            <person name="Duan J."/>
            <person name="Bininda-Emonds O.R.P."/>
            <person name="Chen T."/>
            <person name="Shaw C."/>
        </authorList>
    </citation>
    <scope>NUCLEOTIDE SEQUENCE [MRNA]</scope>
    <scope>PROTEIN SEQUENCE OF 49-66</scope>
    <scope>FUNCTION</scope>
    <scope>SYNTHESIS OF 49-66</scope>
    <scope>AMIDATION AT LEU-66</scope>
    <scope>SUBCELLULAR LOCATION</scope>
    <scope>MUTAGENESIS OF PRO-54 AND THR-58</scope>
    <source>
        <tissue>Skin secretion</tissue>
    </source>
</reference>
<name>MDS_PHYTS</name>
<evidence type="ECO:0000250" key="1">
    <source>
        <dbReference type="UniProtKB" id="C0HLE1"/>
    </source>
</evidence>
<evidence type="ECO:0000255" key="2"/>
<evidence type="ECO:0000256" key="3">
    <source>
        <dbReference type="SAM" id="MobiDB-lite"/>
    </source>
</evidence>
<evidence type="ECO:0000269" key="4">
    <source>
    </source>
</evidence>
<evidence type="ECO:0000303" key="5">
    <source>
    </source>
</evidence>
<evidence type="ECO:0000305" key="6"/>
<evidence type="ECO:0000305" key="7">
    <source>
    </source>
</evidence>
<evidence type="ECO:0000312" key="8">
    <source>
        <dbReference type="EMBL" id="SBO46661.1"/>
    </source>
</evidence>
<proteinExistence type="evidence at protein level"/>
<comment type="function">
    <text evidence="1 4">Antimicrobial peptide with activity against Gram-positive bacteria S.epidermidis ATCC 12228 (MIC=50 uM) and S.aureus (MIC=64 ug/ml and MBC=128 ug/ml) (By similarity) (PubMed:28469603). Not active against some Gram-positive bacteria (methicillin-resistant S.aureus (MRSA), E.faecalis), Gram-negative bacterium E.coli ATCC 25922 and fungus C.albicans at concentrations up to 100 uM (By similarity) (PubMed:28469603). Can only slightly inhibit the formation of biofilm by S.aureus (minimal biofilm inhibitionconcentration MBIC=512 ug/ml, minimal biofilm eradication concentration MBEC&gt;512 ug/ml) (PubMed:28469603). Has an anti-inflammatory effect, since it inhibits the production of the pro-inflammatory cytokines TNF-alpha and IL-1beta (By similarity). Has high activity of stimulation of insulin release, which may protect the species from being eaten by predators by causing fatal hypoglycemia (By similarity). Is not cytotoxic to cancer line cells (By similarity). Shows very low hemolysis on horse erythrocytes and moderate hemolysis on mouse erythrocytes (By similarity) (PubMed:28469603).</text>
</comment>
<comment type="subcellular location">
    <subcellularLocation>
        <location evidence="4">Secreted</location>
    </subcellularLocation>
    <subcellularLocation>
        <location>Target cell membrane</location>
    </subcellularLocation>
</comment>
<comment type="tissue specificity">
    <text evidence="7">Expressed by the skin glands.</text>
</comment>
<comment type="PTM">
    <text evidence="4">In the synthetic mutant medusin-PT1a [T58K], the Leu-50 has been modified in a D-amino acid. In medusin-PT1a, there is an increase in antimicrobial activity, and an increase in hemolytic activity. It is more potent against S.aureus and gains activity against MRSA, E.faecalis, E.coli, P.aeruginosa and C.albicans. There is an important increase in both biofilm inhibition and biofilm eradication.</text>
</comment>
<comment type="miscellaneous">
    <text evidence="6">The primary structure of this peptide is identical to that of Medusin-TR1 (AC C0HLE1).</text>
</comment>
<comment type="similarity">
    <text evidence="6">Belongs to the frog skin active peptide (FSAP) family. Medusin subfamily.</text>
</comment>
<comment type="online information" name="The antimicrobial peptide database">
    <link uri="https://wangapd3.com/database/query_output.php?ID=02995"/>
</comment>
<sequence length="67" mass="7696">MAFLKKSLFLVFFLGFVSLSICEEEKRETDEKENEQEDDREERSEEKRLLGMIPVAITAISALSKLG</sequence>
<accession>A0A1M4BLT1</accession>
<organism>
    <name type="scientific">Phyllomedusa tarsius</name>
    <name type="common">Brownbelly leaf frog</name>
    <name type="synonym">Phyllomedusa tarsia</name>
    <dbReference type="NCBI Taxonomy" id="306084"/>
    <lineage>
        <taxon>Eukaryota</taxon>
        <taxon>Metazoa</taxon>
        <taxon>Chordata</taxon>
        <taxon>Craniata</taxon>
        <taxon>Vertebrata</taxon>
        <taxon>Euteleostomi</taxon>
        <taxon>Amphibia</taxon>
        <taxon>Batrachia</taxon>
        <taxon>Anura</taxon>
        <taxon>Neobatrachia</taxon>
        <taxon>Hyloidea</taxon>
        <taxon>Hylidae</taxon>
        <taxon>Phyllomedusinae</taxon>
        <taxon>Phyllomedusa</taxon>
    </lineage>
</organism>